<dbReference type="EC" id="5.4.2.11" evidence="1"/>
<dbReference type="EMBL" id="CP000947">
    <property type="protein sequence ID" value="ACA32238.1"/>
    <property type="molecule type" value="Genomic_DNA"/>
</dbReference>
<dbReference type="RefSeq" id="WP_011609598.1">
    <property type="nucleotide sequence ID" value="NC_010519.1"/>
</dbReference>
<dbReference type="SMR" id="B0US27"/>
<dbReference type="STRING" id="228400.HSM_0586"/>
<dbReference type="GeneID" id="31486871"/>
<dbReference type="KEGG" id="hsm:HSM_0586"/>
<dbReference type="HOGENOM" id="CLU_033323_1_5_6"/>
<dbReference type="UniPathway" id="UPA00109">
    <property type="reaction ID" value="UER00186"/>
</dbReference>
<dbReference type="GO" id="GO:0004619">
    <property type="term" value="F:phosphoglycerate mutase activity"/>
    <property type="evidence" value="ECO:0007669"/>
    <property type="project" value="UniProtKB-EC"/>
</dbReference>
<dbReference type="GO" id="GO:0006094">
    <property type="term" value="P:gluconeogenesis"/>
    <property type="evidence" value="ECO:0007669"/>
    <property type="project" value="UniProtKB-UniRule"/>
</dbReference>
<dbReference type="GO" id="GO:0006096">
    <property type="term" value="P:glycolytic process"/>
    <property type="evidence" value="ECO:0007669"/>
    <property type="project" value="UniProtKB-UniRule"/>
</dbReference>
<dbReference type="CDD" id="cd07067">
    <property type="entry name" value="HP_PGM_like"/>
    <property type="match status" value="1"/>
</dbReference>
<dbReference type="FunFam" id="3.40.50.1240:FF:000003">
    <property type="entry name" value="2,3-bisphosphoglycerate-dependent phosphoglycerate mutase"/>
    <property type="match status" value="1"/>
</dbReference>
<dbReference type="Gene3D" id="3.40.50.1240">
    <property type="entry name" value="Phosphoglycerate mutase-like"/>
    <property type="match status" value="1"/>
</dbReference>
<dbReference type="HAMAP" id="MF_01039">
    <property type="entry name" value="PGAM_GpmA"/>
    <property type="match status" value="1"/>
</dbReference>
<dbReference type="InterPro" id="IPR013078">
    <property type="entry name" value="His_Pase_superF_clade-1"/>
</dbReference>
<dbReference type="InterPro" id="IPR029033">
    <property type="entry name" value="His_PPase_superfam"/>
</dbReference>
<dbReference type="InterPro" id="IPR005952">
    <property type="entry name" value="Phosphogly_mut1"/>
</dbReference>
<dbReference type="NCBIfam" id="TIGR01258">
    <property type="entry name" value="pgm_1"/>
    <property type="match status" value="1"/>
</dbReference>
<dbReference type="NCBIfam" id="NF010713">
    <property type="entry name" value="PRK14115.1"/>
    <property type="match status" value="1"/>
</dbReference>
<dbReference type="NCBIfam" id="NF010716">
    <property type="entry name" value="PRK14118.1"/>
    <property type="match status" value="1"/>
</dbReference>
<dbReference type="PANTHER" id="PTHR11931">
    <property type="entry name" value="PHOSPHOGLYCERATE MUTASE"/>
    <property type="match status" value="1"/>
</dbReference>
<dbReference type="Pfam" id="PF00300">
    <property type="entry name" value="His_Phos_1"/>
    <property type="match status" value="2"/>
</dbReference>
<dbReference type="PIRSF" id="PIRSF000709">
    <property type="entry name" value="6PFK_2-Ptase"/>
    <property type="match status" value="1"/>
</dbReference>
<dbReference type="SMART" id="SM00855">
    <property type="entry name" value="PGAM"/>
    <property type="match status" value="1"/>
</dbReference>
<dbReference type="SUPFAM" id="SSF53254">
    <property type="entry name" value="Phosphoglycerate mutase-like"/>
    <property type="match status" value="1"/>
</dbReference>
<protein>
    <recommendedName>
        <fullName evidence="1">2,3-bisphosphoglycerate-dependent phosphoglycerate mutase</fullName>
        <shortName evidence="1">BPG-dependent PGAM</shortName>
        <shortName evidence="1">PGAM</shortName>
        <shortName evidence="1">Phosphoglyceromutase</shortName>
        <shortName evidence="1">dPGM</shortName>
        <ecNumber evidence="1">5.4.2.11</ecNumber>
    </recommendedName>
</protein>
<reference key="1">
    <citation type="submission" date="2008-02" db="EMBL/GenBank/DDBJ databases">
        <title>Complete sequence of Haemophilus somnus 2336.</title>
        <authorList>
            <consortium name="US DOE Joint Genome Institute"/>
            <person name="Siddaramappa S."/>
            <person name="Duncan A.J."/>
            <person name="Challacombe J.F."/>
            <person name="Rainey D."/>
            <person name="Gillaspy A.F."/>
            <person name="Carson M."/>
            <person name="Gipson J."/>
            <person name="Gipson M."/>
            <person name="Bruce D."/>
            <person name="Detter J.C."/>
            <person name="Han C.S."/>
            <person name="Land M."/>
            <person name="Tapia R."/>
            <person name="Thompson L.S."/>
            <person name="Orvis J."/>
            <person name="Zaitshik J."/>
            <person name="Barnes G."/>
            <person name="Brettin T.S."/>
            <person name="Dyer D.W."/>
            <person name="Inzana T.J."/>
        </authorList>
    </citation>
    <scope>NUCLEOTIDE SEQUENCE [LARGE SCALE GENOMIC DNA]</scope>
    <source>
        <strain>2336</strain>
    </source>
</reference>
<proteinExistence type="inferred from homology"/>
<sequence>MELVFIRHGFSEWNAKNLFTGWRDVNLTERGIEEAKAAGKKLLEAGYEFDIAFTSVLTRAIKTCNIVLEESNQLWIPQVKHWRLNERHYGALQGLDKKATAEQYGDEQVHIWRRSYDVSPPDLDPQDPNSAHNDRRYALLPKDVVPNAENLKITLERVLPFWEDQIAPALLSGKRVLVTAHGNSLRALAKHIIGISDEEIMAFEIPTGQPLVLKLDEQLNFVEKFYL</sequence>
<evidence type="ECO:0000255" key="1">
    <source>
        <dbReference type="HAMAP-Rule" id="MF_01039"/>
    </source>
</evidence>
<comment type="function">
    <text evidence="1">Catalyzes the interconversion of 2-phosphoglycerate and 3-phosphoglycerate.</text>
</comment>
<comment type="catalytic activity">
    <reaction evidence="1">
        <text>(2R)-2-phosphoglycerate = (2R)-3-phosphoglycerate</text>
        <dbReference type="Rhea" id="RHEA:15901"/>
        <dbReference type="ChEBI" id="CHEBI:58272"/>
        <dbReference type="ChEBI" id="CHEBI:58289"/>
        <dbReference type="EC" id="5.4.2.11"/>
    </reaction>
</comment>
<comment type="pathway">
    <text evidence="1">Carbohydrate degradation; glycolysis; pyruvate from D-glyceraldehyde 3-phosphate: step 3/5.</text>
</comment>
<comment type="subunit">
    <text evidence="1">Homodimer.</text>
</comment>
<comment type="similarity">
    <text evidence="1">Belongs to the phosphoglycerate mutase family. BPG-dependent PGAM subfamily.</text>
</comment>
<feature type="chain" id="PRO_1000084325" description="2,3-bisphosphoglycerate-dependent phosphoglycerate mutase">
    <location>
        <begin position="1"/>
        <end position="227"/>
    </location>
</feature>
<feature type="active site" description="Tele-phosphohistidine intermediate" evidence="1">
    <location>
        <position position="8"/>
    </location>
</feature>
<feature type="active site" description="Proton donor/acceptor" evidence="1">
    <location>
        <position position="86"/>
    </location>
</feature>
<feature type="binding site" evidence="1">
    <location>
        <begin position="7"/>
        <end position="14"/>
    </location>
    <ligand>
        <name>substrate</name>
    </ligand>
</feature>
<feature type="binding site" evidence="1">
    <location>
        <begin position="20"/>
        <end position="21"/>
    </location>
    <ligand>
        <name>substrate</name>
    </ligand>
</feature>
<feature type="binding site" evidence="1">
    <location>
        <position position="59"/>
    </location>
    <ligand>
        <name>substrate</name>
    </ligand>
</feature>
<feature type="binding site" evidence="1">
    <location>
        <begin position="86"/>
        <end position="89"/>
    </location>
    <ligand>
        <name>substrate</name>
    </ligand>
</feature>
<feature type="binding site" evidence="1">
    <location>
        <position position="97"/>
    </location>
    <ligand>
        <name>substrate</name>
    </ligand>
</feature>
<feature type="binding site" evidence="1">
    <location>
        <begin position="113"/>
        <end position="114"/>
    </location>
    <ligand>
        <name>substrate</name>
    </ligand>
</feature>
<feature type="binding site" evidence="1">
    <location>
        <begin position="182"/>
        <end position="183"/>
    </location>
    <ligand>
        <name>substrate</name>
    </ligand>
</feature>
<feature type="site" description="Transition state stabilizer" evidence="1">
    <location>
        <position position="181"/>
    </location>
</feature>
<name>GPMA_HISS2</name>
<gene>
    <name evidence="1" type="primary">gpmA</name>
    <name type="ordered locus">HSM_0586</name>
</gene>
<organism>
    <name type="scientific">Histophilus somni (strain 2336)</name>
    <name type="common">Haemophilus somnus</name>
    <dbReference type="NCBI Taxonomy" id="228400"/>
    <lineage>
        <taxon>Bacteria</taxon>
        <taxon>Pseudomonadati</taxon>
        <taxon>Pseudomonadota</taxon>
        <taxon>Gammaproteobacteria</taxon>
        <taxon>Pasteurellales</taxon>
        <taxon>Pasteurellaceae</taxon>
        <taxon>Histophilus</taxon>
    </lineage>
</organism>
<keyword id="KW-0312">Gluconeogenesis</keyword>
<keyword id="KW-0324">Glycolysis</keyword>
<keyword id="KW-0413">Isomerase</keyword>
<accession>B0US27</accession>